<reference key="1">
    <citation type="journal article" date="2006" name="BMC Genomics">
        <title>The genome of the square archaeon Haloquadratum walsbyi: life at the limits of water activity.</title>
        <authorList>
            <person name="Bolhuis H."/>
            <person name="Palm P."/>
            <person name="Wende A."/>
            <person name="Falb M."/>
            <person name="Rampp M."/>
            <person name="Rodriguez-Valera F."/>
            <person name="Pfeiffer F."/>
            <person name="Oesterhelt D."/>
        </authorList>
    </citation>
    <scope>NUCLEOTIDE SEQUENCE [LARGE SCALE GENOMIC DNA]</scope>
    <source>
        <strain>DSM 16790 / HBSQ001</strain>
    </source>
</reference>
<comment type="function">
    <text evidence="1">Involved in DNA repair and in homologous recombination. Binds and assemble on single-stranded DNA to form a nucleoprotein filament. Hydrolyzes ATP in a ssDNA-dependent manner and promotes DNA strand exchange between homologous DNA molecules.</text>
</comment>
<comment type="similarity">
    <text evidence="1">Belongs to the eukaryotic RecA-like protein family.</text>
</comment>
<keyword id="KW-0067">ATP-binding</keyword>
<keyword id="KW-0227">DNA damage</keyword>
<keyword id="KW-0233">DNA recombination</keyword>
<keyword id="KW-0238">DNA-binding</keyword>
<keyword id="KW-0547">Nucleotide-binding</keyword>
<keyword id="KW-1185">Reference proteome</keyword>
<dbReference type="EMBL" id="AM180088">
    <property type="protein sequence ID" value="CAJ53526.1"/>
    <property type="molecule type" value="Genomic_DNA"/>
</dbReference>
<dbReference type="RefSeq" id="WP_011572623.1">
    <property type="nucleotide sequence ID" value="NC_008212.1"/>
</dbReference>
<dbReference type="SMR" id="Q18EU1"/>
<dbReference type="STRING" id="362976.HQ_3429A"/>
<dbReference type="GeneID" id="4194566"/>
<dbReference type="KEGG" id="hwa:HQ_3429A"/>
<dbReference type="eggNOG" id="arCOG00415">
    <property type="taxonomic scope" value="Archaea"/>
</dbReference>
<dbReference type="HOGENOM" id="CLU_041732_0_0_2"/>
<dbReference type="Proteomes" id="UP000001975">
    <property type="component" value="Chromosome"/>
</dbReference>
<dbReference type="GO" id="GO:0005524">
    <property type="term" value="F:ATP binding"/>
    <property type="evidence" value="ECO:0007669"/>
    <property type="project" value="UniProtKB-UniRule"/>
</dbReference>
<dbReference type="GO" id="GO:0016887">
    <property type="term" value="F:ATP hydrolysis activity"/>
    <property type="evidence" value="ECO:0007669"/>
    <property type="project" value="InterPro"/>
</dbReference>
<dbReference type="GO" id="GO:0140664">
    <property type="term" value="F:ATP-dependent DNA damage sensor activity"/>
    <property type="evidence" value="ECO:0007669"/>
    <property type="project" value="InterPro"/>
</dbReference>
<dbReference type="GO" id="GO:0003684">
    <property type="term" value="F:damaged DNA binding"/>
    <property type="evidence" value="ECO:0007669"/>
    <property type="project" value="UniProtKB-UniRule"/>
</dbReference>
<dbReference type="GO" id="GO:0006310">
    <property type="term" value="P:DNA recombination"/>
    <property type="evidence" value="ECO:0007669"/>
    <property type="project" value="UniProtKB-UniRule"/>
</dbReference>
<dbReference type="GO" id="GO:0006281">
    <property type="term" value="P:DNA repair"/>
    <property type="evidence" value="ECO:0007669"/>
    <property type="project" value="UniProtKB-UniRule"/>
</dbReference>
<dbReference type="Gene3D" id="1.10.150.20">
    <property type="entry name" value="5' to 3' exonuclease, C-terminal subdomain"/>
    <property type="match status" value="1"/>
</dbReference>
<dbReference type="Gene3D" id="3.40.50.300">
    <property type="entry name" value="P-loop containing nucleotide triphosphate hydrolases"/>
    <property type="match status" value="1"/>
</dbReference>
<dbReference type="HAMAP" id="MF_00348">
    <property type="entry name" value="RadA_arch"/>
    <property type="match status" value="1"/>
</dbReference>
<dbReference type="InterPro" id="IPR003593">
    <property type="entry name" value="AAA+_ATPase"/>
</dbReference>
<dbReference type="InterPro" id="IPR013632">
    <property type="entry name" value="DNA_recomb/repair_Rad51_C"/>
</dbReference>
<dbReference type="InterPro" id="IPR011938">
    <property type="entry name" value="DNA_recomb/repair_RadA"/>
</dbReference>
<dbReference type="InterPro" id="IPR016467">
    <property type="entry name" value="DNA_recomb/repair_RecA-like"/>
</dbReference>
<dbReference type="InterPro" id="IPR010995">
    <property type="entry name" value="DNA_repair_Rad51/TF_NusA_a-hlx"/>
</dbReference>
<dbReference type="InterPro" id="IPR027417">
    <property type="entry name" value="P-loop_NTPase"/>
</dbReference>
<dbReference type="InterPro" id="IPR020588">
    <property type="entry name" value="RecA_ATP-bd"/>
</dbReference>
<dbReference type="InterPro" id="IPR020587">
    <property type="entry name" value="RecA_monomer-monomer_interface"/>
</dbReference>
<dbReference type="NCBIfam" id="NF003301">
    <property type="entry name" value="PRK04301.1"/>
    <property type="match status" value="1"/>
</dbReference>
<dbReference type="NCBIfam" id="TIGR02236">
    <property type="entry name" value="recomb_radA"/>
    <property type="match status" value="1"/>
</dbReference>
<dbReference type="PANTHER" id="PTHR22942:SF30">
    <property type="entry name" value="MEIOTIC RECOMBINATION PROTEIN DMC1_LIM15 HOMOLOG"/>
    <property type="match status" value="1"/>
</dbReference>
<dbReference type="PANTHER" id="PTHR22942">
    <property type="entry name" value="RECA/RAD51/RADA DNA STRAND-PAIRING FAMILY MEMBER"/>
    <property type="match status" value="1"/>
</dbReference>
<dbReference type="Pfam" id="PF14520">
    <property type="entry name" value="HHH_5"/>
    <property type="match status" value="1"/>
</dbReference>
<dbReference type="Pfam" id="PF08423">
    <property type="entry name" value="Rad51"/>
    <property type="match status" value="2"/>
</dbReference>
<dbReference type="PIRSF" id="PIRSF005856">
    <property type="entry name" value="Rad51"/>
    <property type="match status" value="1"/>
</dbReference>
<dbReference type="SMART" id="SM00382">
    <property type="entry name" value="AAA"/>
    <property type="match status" value="1"/>
</dbReference>
<dbReference type="SUPFAM" id="SSF52540">
    <property type="entry name" value="P-loop containing nucleoside triphosphate hydrolases"/>
    <property type="match status" value="1"/>
</dbReference>
<dbReference type="SUPFAM" id="SSF47794">
    <property type="entry name" value="Rad51 N-terminal domain-like"/>
    <property type="match status" value="1"/>
</dbReference>
<dbReference type="PROSITE" id="PS50162">
    <property type="entry name" value="RECA_2"/>
    <property type="match status" value="1"/>
</dbReference>
<dbReference type="PROSITE" id="PS50163">
    <property type="entry name" value="RECA_3"/>
    <property type="match status" value="1"/>
</dbReference>
<gene>
    <name evidence="1" type="primary">radA</name>
    <name type="ordered locus">HQ_3429A</name>
</gene>
<proteinExistence type="inferred from homology"/>
<protein>
    <recommendedName>
        <fullName evidence="1">DNA repair and recombination protein RadA</fullName>
    </recommendedName>
</protein>
<sequence length="343" mass="37279">MPEDELEDLPGVGPATSDKLVDAGFESYQAIAVASPAEMSNTADVGESTASDIINAARDAADVGGFETGAAVLQRREEIGKLSWKIPEVDELLGGGIETQSITEVYGEFGAGKSQVTHQMAVNVQLPPEHGGLGGAAIFVDSEDTFRPERIDDMLRGLDDEIITDLLERREIEGTPGDDETMKALLDSFLDHIHVAKAFNSNHQILLAEKAKELARDNQDSGFPVRLLCVDSLTAHFRAEYVGRGSLAERQQKLNKHLHDLMRIGDLYNTAVLVTNQVASNPDSYFGDPTQPIGGNILGHTSTFRMYLRKSKNDKRIVRLVDAPNLADGEAVMRVKDAGLKPE</sequence>
<feature type="chain" id="PRO_1000048383" description="DNA repair and recombination protein RadA">
    <location>
        <begin position="1"/>
        <end position="343"/>
    </location>
</feature>
<feature type="binding site" evidence="1">
    <location>
        <begin position="107"/>
        <end position="114"/>
    </location>
    <ligand>
        <name>ATP</name>
        <dbReference type="ChEBI" id="CHEBI:30616"/>
    </ligand>
</feature>
<name>RADA_HALWD</name>
<accession>Q18EU1</accession>
<evidence type="ECO:0000255" key="1">
    <source>
        <dbReference type="HAMAP-Rule" id="MF_00348"/>
    </source>
</evidence>
<organism>
    <name type="scientific">Haloquadratum walsbyi (strain DSM 16790 / HBSQ001)</name>
    <dbReference type="NCBI Taxonomy" id="362976"/>
    <lineage>
        <taxon>Archaea</taxon>
        <taxon>Methanobacteriati</taxon>
        <taxon>Methanobacteriota</taxon>
        <taxon>Stenosarchaea group</taxon>
        <taxon>Halobacteria</taxon>
        <taxon>Halobacteriales</taxon>
        <taxon>Haloferacaceae</taxon>
        <taxon>Haloquadratum</taxon>
    </lineage>
</organism>